<evidence type="ECO:0000305" key="1"/>
<name>RL29_LACLA</name>
<protein>
    <recommendedName>
        <fullName evidence="1">Large ribosomal subunit protein uL29</fullName>
    </recommendedName>
    <alternativeName>
        <fullName>50S ribosomal protein L29</fullName>
    </alternativeName>
</protein>
<reference key="1">
    <citation type="journal article" date="2001" name="Genome Res.">
        <title>The complete genome sequence of the lactic acid bacterium Lactococcus lactis ssp. lactis IL1403.</title>
        <authorList>
            <person name="Bolotin A."/>
            <person name="Wincker P."/>
            <person name="Mauger S."/>
            <person name="Jaillon O."/>
            <person name="Malarme K."/>
            <person name="Weissenbach J."/>
            <person name="Ehrlich S.D."/>
            <person name="Sorokin A."/>
        </authorList>
    </citation>
    <scope>NUCLEOTIDE SEQUENCE [LARGE SCALE GENOMIC DNA]</scope>
    <source>
        <strain>IL1403</strain>
    </source>
</reference>
<organism>
    <name type="scientific">Lactococcus lactis subsp. lactis (strain IL1403)</name>
    <name type="common">Streptococcus lactis</name>
    <dbReference type="NCBI Taxonomy" id="272623"/>
    <lineage>
        <taxon>Bacteria</taxon>
        <taxon>Bacillati</taxon>
        <taxon>Bacillota</taxon>
        <taxon>Bacilli</taxon>
        <taxon>Lactobacillales</taxon>
        <taxon>Streptococcaceae</taxon>
        <taxon>Lactococcus</taxon>
    </lineage>
</organism>
<dbReference type="EMBL" id="AE005176">
    <property type="protein sequence ID" value="AAK06189.1"/>
    <property type="molecule type" value="Genomic_DNA"/>
</dbReference>
<dbReference type="PIR" id="C86886">
    <property type="entry name" value="C86886"/>
</dbReference>
<dbReference type="RefSeq" id="NP_268248.1">
    <property type="nucleotide sequence ID" value="NC_002662.1"/>
</dbReference>
<dbReference type="RefSeq" id="WP_003129957.1">
    <property type="nucleotide sequence ID" value="NC_002662.1"/>
</dbReference>
<dbReference type="SMR" id="Q9CDX0"/>
<dbReference type="PaxDb" id="272623-L0423"/>
<dbReference type="EnsemblBacteria" id="AAK06189">
    <property type="protein sequence ID" value="AAK06189"/>
    <property type="gene ID" value="L0423"/>
</dbReference>
<dbReference type="GeneID" id="89634438"/>
<dbReference type="KEGG" id="lla:L0423"/>
<dbReference type="PATRIC" id="fig|272623.7.peg.2250"/>
<dbReference type="eggNOG" id="COG0255">
    <property type="taxonomic scope" value="Bacteria"/>
</dbReference>
<dbReference type="HOGENOM" id="CLU_158491_5_2_9"/>
<dbReference type="OrthoDB" id="9815192at2"/>
<dbReference type="Proteomes" id="UP000002196">
    <property type="component" value="Chromosome"/>
</dbReference>
<dbReference type="GO" id="GO:0022625">
    <property type="term" value="C:cytosolic large ribosomal subunit"/>
    <property type="evidence" value="ECO:0007669"/>
    <property type="project" value="TreeGrafter"/>
</dbReference>
<dbReference type="GO" id="GO:0003735">
    <property type="term" value="F:structural constituent of ribosome"/>
    <property type="evidence" value="ECO:0007669"/>
    <property type="project" value="InterPro"/>
</dbReference>
<dbReference type="GO" id="GO:0006412">
    <property type="term" value="P:translation"/>
    <property type="evidence" value="ECO:0007669"/>
    <property type="project" value="UniProtKB-UniRule"/>
</dbReference>
<dbReference type="CDD" id="cd00427">
    <property type="entry name" value="Ribosomal_L29_HIP"/>
    <property type="match status" value="1"/>
</dbReference>
<dbReference type="FunFam" id="1.10.287.310:FF:000001">
    <property type="entry name" value="50S ribosomal protein L29"/>
    <property type="match status" value="1"/>
</dbReference>
<dbReference type="Gene3D" id="1.10.287.310">
    <property type="match status" value="1"/>
</dbReference>
<dbReference type="HAMAP" id="MF_00374">
    <property type="entry name" value="Ribosomal_uL29"/>
    <property type="match status" value="1"/>
</dbReference>
<dbReference type="InterPro" id="IPR050063">
    <property type="entry name" value="Ribosomal_protein_uL29"/>
</dbReference>
<dbReference type="InterPro" id="IPR001854">
    <property type="entry name" value="Ribosomal_uL29"/>
</dbReference>
<dbReference type="InterPro" id="IPR018254">
    <property type="entry name" value="Ribosomal_uL29_CS"/>
</dbReference>
<dbReference type="InterPro" id="IPR036049">
    <property type="entry name" value="Ribosomal_uL29_sf"/>
</dbReference>
<dbReference type="NCBIfam" id="TIGR00012">
    <property type="entry name" value="L29"/>
    <property type="match status" value="1"/>
</dbReference>
<dbReference type="PANTHER" id="PTHR10916">
    <property type="entry name" value="60S RIBOSOMAL PROTEIN L35/50S RIBOSOMAL PROTEIN L29"/>
    <property type="match status" value="1"/>
</dbReference>
<dbReference type="PANTHER" id="PTHR10916:SF0">
    <property type="entry name" value="LARGE RIBOSOMAL SUBUNIT PROTEIN UL29C"/>
    <property type="match status" value="1"/>
</dbReference>
<dbReference type="Pfam" id="PF00831">
    <property type="entry name" value="Ribosomal_L29"/>
    <property type="match status" value="1"/>
</dbReference>
<dbReference type="SUPFAM" id="SSF46561">
    <property type="entry name" value="Ribosomal protein L29 (L29p)"/>
    <property type="match status" value="1"/>
</dbReference>
<dbReference type="PROSITE" id="PS00579">
    <property type="entry name" value="RIBOSOMAL_L29"/>
    <property type="match status" value="1"/>
</dbReference>
<comment type="similarity">
    <text evidence="1">Belongs to the universal ribosomal protein uL29 family.</text>
</comment>
<sequence length="69" mass="7859">MKLSETKSLLKDLRALSVEELTTREAELKKELFDLRFQAAAGRLENTAKLDEVKKTIARVKTVQAELNK</sequence>
<keyword id="KW-1185">Reference proteome</keyword>
<keyword id="KW-0687">Ribonucleoprotein</keyword>
<keyword id="KW-0689">Ribosomal protein</keyword>
<proteinExistence type="inferred from homology"/>
<feature type="chain" id="PRO_0000130405" description="Large ribosomal subunit protein uL29">
    <location>
        <begin position="1"/>
        <end position="69"/>
    </location>
</feature>
<gene>
    <name type="primary">rpmC</name>
    <name type="ordered locus">LL2091</name>
    <name type="ORF">L0423</name>
</gene>
<accession>Q9CDX0</accession>